<comment type="function">
    <text evidence="1">Catalyzes the phosphorylation of nicotinamide riboside (NR) and nicotinic acid riboside (NaR) to form nicotinamide mononucleotide (NMN) and nicotinic acid mononucleotide (NaMN).</text>
</comment>
<comment type="catalytic activity">
    <reaction evidence="1">
        <text>beta-nicotinamide D-riboside + ATP = beta-nicotinamide D-ribonucleotide + ADP + H(+)</text>
        <dbReference type="Rhea" id="RHEA:14017"/>
        <dbReference type="ChEBI" id="CHEBI:14649"/>
        <dbReference type="ChEBI" id="CHEBI:15378"/>
        <dbReference type="ChEBI" id="CHEBI:15927"/>
        <dbReference type="ChEBI" id="CHEBI:30616"/>
        <dbReference type="ChEBI" id="CHEBI:456216"/>
        <dbReference type="EC" id="2.7.1.22"/>
    </reaction>
</comment>
<comment type="catalytic activity">
    <reaction evidence="1">
        <text>beta-D-ribosylnicotinate + ATP = nicotinate beta-D-ribonucleotide + ADP + H(+)</text>
        <dbReference type="Rhea" id="RHEA:25568"/>
        <dbReference type="ChEBI" id="CHEBI:15378"/>
        <dbReference type="ChEBI" id="CHEBI:30616"/>
        <dbReference type="ChEBI" id="CHEBI:57502"/>
        <dbReference type="ChEBI" id="CHEBI:58527"/>
        <dbReference type="ChEBI" id="CHEBI:456216"/>
        <dbReference type="EC" id="2.7.1.173"/>
    </reaction>
</comment>
<comment type="pathway">
    <text evidence="1">Cofactor biosynthesis; NAD(+) biosynthesis.</text>
</comment>
<comment type="subunit">
    <text evidence="1">Monomer.</text>
</comment>
<comment type="similarity">
    <text evidence="2">Belongs to the uridine kinase family. NRK subfamily.</text>
</comment>
<sequence>MKTFVIGIGGVTNGGKTTLAKNLQKRLPNCSVISQDDFFKPESEIDIDENGFLQYDVLEALNMEKMMSAVSCWMENPGSSAGPAALESAQGVPILIIEGFLLFNYKPLDTIWNRSYFLTVPYEECKRRRSTRVYEPPDPPGYFDGHVWPMYLKHRQEMNSITWDIVYLDGTRSEEDLFSQVYEDVKQELEKQNGL</sequence>
<accession>Q6AY91</accession>
<evidence type="ECO:0000250" key="1">
    <source>
        <dbReference type="UniProtKB" id="Q9NWW6"/>
    </source>
</evidence>
<evidence type="ECO:0000305" key="2"/>
<proteinExistence type="evidence at transcript level"/>
<dbReference type="EC" id="2.7.1.22" evidence="1"/>
<dbReference type="EC" id="2.7.1.173" evidence="1"/>
<dbReference type="EMBL" id="BC079144">
    <property type="protein sequence ID" value="AAH79144.1"/>
    <property type="molecule type" value="mRNA"/>
</dbReference>
<dbReference type="RefSeq" id="NP_001019463.1">
    <property type="nucleotide sequence ID" value="NM_001024292.1"/>
</dbReference>
<dbReference type="SMR" id="Q6AY91"/>
<dbReference type="FunCoup" id="Q6AY91">
    <property type="interactions" value="100"/>
</dbReference>
<dbReference type="STRING" id="10116.ENSRNOP00000016930"/>
<dbReference type="PhosphoSitePlus" id="Q6AY91"/>
<dbReference type="PaxDb" id="10116-ENSRNOP00000016930"/>
<dbReference type="Ensembl" id="ENSRNOT00000016930.5">
    <property type="protein sequence ID" value="ENSRNOP00000016930.3"/>
    <property type="gene ID" value="ENSRNOG00000012665.5"/>
</dbReference>
<dbReference type="GeneID" id="499330"/>
<dbReference type="KEGG" id="rno:499330"/>
<dbReference type="UCSC" id="RGD:1564687">
    <property type="organism name" value="rat"/>
</dbReference>
<dbReference type="AGR" id="RGD:1564687"/>
<dbReference type="CTD" id="54981"/>
<dbReference type="RGD" id="1564687">
    <property type="gene designation" value="Nmrk1"/>
</dbReference>
<dbReference type="eggNOG" id="KOG3308">
    <property type="taxonomic scope" value="Eukaryota"/>
</dbReference>
<dbReference type="GeneTree" id="ENSGT00940000159384"/>
<dbReference type="HOGENOM" id="CLU_058668_0_0_1"/>
<dbReference type="InParanoid" id="Q6AY91"/>
<dbReference type="OrthoDB" id="10041966at2759"/>
<dbReference type="PhylomeDB" id="Q6AY91"/>
<dbReference type="TreeFam" id="TF105395"/>
<dbReference type="Reactome" id="R-RNO-196807">
    <property type="pathway name" value="Nicotinate metabolism"/>
</dbReference>
<dbReference type="UniPathway" id="UPA00253"/>
<dbReference type="PRO" id="PR:Q6AY91"/>
<dbReference type="Proteomes" id="UP000002494">
    <property type="component" value="Chromosome 1"/>
</dbReference>
<dbReference type="Bgee" id="ENSRNOG00000012665">
    <property type="expression patterns" value="Expressed in kidney and 19 other cell types or tissues"/>
</dbReference>
<dbReference type="GO" id="GO:0005737">
    <property type="term" value="C:cytoplasm"/>
    <property type="evidence" value="ECO:0000318"/>
    <property type="project" value="GO_Central"/>
</dbReference>
<dbReference type="GO" id="GO:0005524">
    <property type="term" value="F:ATP binding"/>
    <property type="evidence" value="ECO:0007669"/>
    <property type="project" value="UniProtKB-KW"/>
</dbReference>
<dbReference type="GO" id="GO:0046872">
    <property type="term" value="F:metal ion binding"/>
    <property type="evidence" value="ECO:0007669"/>
    <property type="project" value="UniProtKB-KW"/>
</dbReference>
<dbReference type="GO" id="GO:0034317">
    <property type="term" value="F:nicotinate riboside kinase activity"/>
    <property type="evidence" value="ECO:0007669"/>
    <property type="project" value="UniProtKB-EC"/>
</dbReference>
<dbReference type="GO" id="GO:0050262">
    <property type="term" value="F:ribosylnicotinamide kinase activity"/>
    <property type="evidence" value="ECO:0000266"/>
    <property type="project" value="RGD"/>
</dbReference>
<dbReference type="GO" id="GO:0061769">
    <property type="term" value="F:ribosylnicotinate kinase activity"/>
    <property type="evidence" value="ECO:0000266"/>
    <property type="project" value="RGD"/>
</dbReference>
<dbReference type="GO" id="GO:0009435">
    <property type="term" value="P:NAD biosynthetic process"/>
    <property type="evidence" value="ECO:0007669"/>
    <property type="project" value="UniProtKB-UniPathway"/>
</dbReference>
<dbReference type="CDD" id="cd02024">
    <property type="entry name" value="NRK1"/>
    <property type="match status" value="1"/>
</dbReference>
<dbReference type="FunFam" id="3.40.50.300:FF:000853">
    <property type="entry name" value="Nicotinamide riboside kinase 1"/>
    <property type="match status" value="1"/>
</dbReference>
<dbReference type="Gene3D" id="3.40.50.300">
    <property type="entry name" value="P-loop containing nucleotide triphosphate hydrolases"/>
    <property type="match status" value="1"/>
</dbReference>
<dbReference type="InterPro" id="IPR027417">
    <property type="entry name" value="P-loop_NTPase"/>
</dbReference>
<dbReference type="PANTHER" id="PTHR10285">
    <property type="entry name" value="URIDINE KINASE"/>
    <property type="match status" value="1"/>
</dbReference>
<dbReference type="Pfam" id="PF13238">
    <property type="entry name" value="AAA_18"/>
    <property type="match status" value="1"/>
</dbReference>
<dbReference type="SUPFAM" id="SSF52540">
    <property type="entry name" value="P-loop containing nucleoside triphosphate hydrolases"/>
    <property type="match status" value="1"/>
</dbReference>
<name>NRK1_RAT</name>
<keyword id="KW-0067">ATP-binding</keyword>
<keyword id="KW-0418">Kinase</keyword>
<keyword id="KW-0460">Magnesium</keyword>
<keyword id="KW-0479">Metal-binding</keyword>
<keyword id="KW-0547">Nucleotide-binding</keyword>
<keyword id="KW-0662">Pyridine nucleotide biosynthesis</keyword>
<keyword id="KW-1185">Reference proteome</keyword>
<keyword id="KW-0808">Transferase</keyword>
<reference key="1">
    <citation type="journal article" date="2004" name="Genome Res.">
        <title>The status, quality, and expansion of the NIH full-length cDNA project: the Mammalian Gene Collection (MGC).</title>
        <authorList>
            <consortium name="The MGC Project Team"/>
        </authorList>
    </citation>
    <scope>NUCLEOTIDE SEQUENCE [LARGE SCALE MRNA]</scope>
    <source>
        <tissue>Kidney</tissue>
    </source>
</reference>
<protein>
    <recommendedName>
        <fullName>Nicotinamide riboside kinase 1</fullName>
        <shortName>NRK 1</shortName>
        <shortName>NmR-K 1</shortName>
        <ecNumber evidence="1">2.7.1.22</ecNumber>
    </recommendedName>
    <alternativeName>
        <fullName>Nicotinic acid riboside kinase 1</fullName>
        <ecNumber evidence="1">2.7.1.173</ecNumber>
    </alternativeName>
    <alternativeName>
        <fullName>Ribosylnicotinamide kinase 1</fullName>
        <shortName>RNK 1</shortName>
    </alternativeName>
    <alternativeName>
        <fullName>Ribosylnicotinic acid kinase 1</fullName>
    </alternativeName>
</protein>
<feature type="chain" id="PRO_0000215893" description="Nicotinamide riboside kinase 1">
    <location>
        <begin position="1"/>
        <end position="195"/>
    </location>
</feature>
<feature type="active site" description="Proton acceptor" evidence="1">
    <location>
        <position position="36"/>
    </location>
</feature>
<feature type="binding site" evidence="1">
    <location>
        <begin position="10"/>
        <end position="18"/>
    </location>
    <ligand>
        <name>ATP</name>
        <dbReference type="ChEBI" id="CHEBI:30616"/>
    </ligand>
</feature>
<feature type="binding site" evidence="1">
    <location>
        <position position="17"/>
    </location>
    <ligand>
        <name>Mg(2+)</name>
        <dbReference type="ChEBI" id="CHEBI:18420"/>
    </ligand>
</feature>
<feature type="binding site" evidence="1">
    <location>
        <begin position="36"/>
        <end position="39"/>
    </location>
    <ligand>
        <name>substrate</name>
    </ligand>
</feature>
<feature type="binding site" evidence="1">
    <location>
        <position position="36"/>
    </location>
    <ligand>
        <name>Mg(2+)</name>
        <dbReference type="ChEBI" id="CHEBI:18420"/>
    </ligand>
</feature>
<feature type="binding site" evidence="1">
    <location>
        <begin position="55"/>
        <end position="56"/>
    </location>
    <ligand>
        <name>substrate</name>
    </ligand>
</feature>
<feature type="binding site" evidence="1">
    <location>
        <position position="128"/>
    </location>
    <ligand>
        <name>ATP</name>
        <dbReference type="ChEBI" id="CHEBI:30616"/>
    </ligand>
</feature>
<feature type="binding site" evidence="1">
    <location>
        <position position="129"/>
    </location>
    <ligand>
        <name>substrate</name>
    </ligand>
</feature>
<feature type="binding site" evidence="1">
    <location>
        <begin position="132"/>
        <end position="134"/>
    </location>
    <ligand>
        <name>ATP</name>
        <dbReference type="ChEBI" id="CHEBI:30616"/>
    </ligand>
</feature>
<feature type="binding site" evidence="1">
    <location>
        <begin position="134"/>
        <end position="135"/>
    </location>
    <ligand>
        <name>substrate</name>
    </ligand>
</feature>
<feature type="binding site" evidence="1">
    <location>
        <begin position="172"/>
        <end position="174"/>
    </location>
    <ligand>
        <name>ATP</name>
        <dbReference type="ChEBI" id="CHEBI:30616"/>
    </ligand>
</feature>
<organism>
    <name type="scientific">Rattus norvegicus</name>
    <name type="common">Rat</name>
    <dbReference type="NCBI Taxonomy" id="10116"/>
    <lineage>
        <taxon>Eukaryota</taxon>
        <taxon>Metazoa</taxon>
        <taxon>Chordata</taxon>
        <taxon>Craniata</taxon>
        <taxon>Vertebrata</taxon>
        <taxon>Euteleostomi</taxon>
        <taxon>Mammalia</taxon>
        <taxon>Eutheria</taxon>
        <taxon>Euarchontoglires</taxon>
        <taxon>Glires</taxon>
        <taxon>Rodentia</taxon>
        <taxon>Myomorpha</taxon>
        <taxon>Muroidea</taxon>
        <taxon>Muridae</taxon>
        <taxon>Murinae</taxon>
        <taxon>Rattus</taxon>
    </lineage>
</organism>
<gene>
    <name type="primary">Nmrk1</name>
    <name type="synonym">Nrk1</name>
</gene>